<evidence type="ECO:0000250" key="1"/>
<evidence type="ECO:0000255" key="2">
    <source>
        <dbReference type="HAMAP-Rule" id="MF_01129"/>
    </source>
</evidence>
<keyword id="KW-0106">Calcium</keyword>
<keyword id="KW-0997">Cell inner membrane</keyword>
<keyword id="KW-1003">Cell membrane</keyword>
<keyword id="KW-0375">Hydrogen ion transport</keyword>
<keyword id="KW-0406">Ion transport</keyword>
<keyword id="KW-0460">Magnesium</keyword>
<keyword id="KW-0472">Membrane</keyword>
<keyword id="KW-0479">Metal-binding</keyword>
<keyword id="KW-1185">Reference proteome</keyword>
<keyword id="KW-1278">Translocase</keyword>
<keyword id="KW-0812">Transmembrane</keyword>
<keyword id="KW-1133">Transmembrane helix</keyword>
<keyword id="KW-0813">Transport</keyword>
<dbReference type="EC" id="7.1.3.1" evidence="2"/>
<dbReference type="EMBL" id="AE006470">
    <property type="protein sequence ID" value="AAM72191.1"/>
    <property type="molecule type" value="Genomic_DNA"/>
</dbReference>
<dbReference type="RefSeq" id="NP_661849.1">
    <property type="nucleotide sequence ID" value="NC_002932.3"/>
</dbReference>
<dbReference type="SMR" id="Q8KDT8"/>
<dbReference type="STRING" id="194439.CT0956"/>
<dbReference type="EnsemblBacteria" id="AAM72191">
    <property type="protein sequence ID" value="AAM72191"/>
    <property type="gene ID" value="CT0956"/>
</dbReference>
<dbReference type="KEGG" id="cte:CT0956"/>
<dbReference type="PATRIC" id="fig|194439.7.peg.866"/>
<dbReference type="eggNOG" id="COG3808">
    <property type="taxonomic scope" value="Bacteria"/>
</dbReference>
<dbReference type="HOGENOM" id="CLU_008743_3_1_10"/>
<dbReference type="OrthoDB" id="9808652at2"/>
<dbReference type="Proteomes" id="UP000001007">
    <property type="component" value="Chromosome"/>
</dbReference>
<dbReference type="GO" id="GO:0005886">
    <property type="term" value="C:plasma membrane"/>
    <property type="evidence" value="ECO:0007669"/>
    <property type="project" value="UniProtKB-SubCell"/>
</dbReference>
<dbReference type="GO" id="GO:0009678">
    <property type="term" value="F:diphosphate hydrolysis-driven proton transmembrane transporter activity"/>
    <property type="evidence" value="ECO:0007669"/>
    <property type="project" value="UniProtKB-UniRule"/>
</dbReference>
<dbReference type="GO" id="GO:0004427">
    <property type="term" value="F:inorganic diphosphate phosphatase activity"/>
    <property type="evidence" value="ECO:0007669"/>
    <property type="project" value="UniProtKB-UniRule"/>
</dbReference>
<dbReference type="GO" id="GO:0000287">
    <property type="term" value="F:magnesium ion binding"/>
    <property type="evidence" value="ECO:0007669"/>
    <property type="project" value="UniProtKB-UniRule"/>
</dbReference>
<dbReference type="HAMAP" id="MF_01129">
    <property type="entry name" value="PPase_energized_pump"/>
    <property type="match status" value="1"/>
</dbReference>
<dbReference type="InterPro" id="IPR004131">
    <property type="entry name" value="PPase-energised_H-pump"/>
</dbReference>
<dbReference type="NCBIfam" id="NF001950">
    <property type="entry name" value="PRK00733.1-1"/>
    <property type="match status" value="1"/>
</dbReference>
<dbReference type="PANTHER" id="PTHR31998">
    <property type="entry name" value="K(+)-INSENSITIVE PYROPHOSPHATE-ENERGIZED PROTON PUMP"/>
    <property type="match status" value="1"/>
</dbReference>
<dbReference type="Pfam" id="PF03030">
    <property type="entry name" value="H_PPase"/>
    <property type="match status" value="1"/>
</dbReference>
<dbReference type="PIRSF" id="PIRSF001265">
    <property type="entry name" value="H+-PPase"/>
    <property type="match status" value="1"/>
</dbReference>
<sequence length="750" mass="80370">MYGLVVCLFGMIFGLIQYQGINKLPVHAAMKEISDLIYETCKTYLITQGKFIIILWALVAAIIVAYFGGLNHLAPDKVVFILACSLLGIAGSYTVAWFGMRINTFANSRTAFASLGGKPFPTYAIPLRAGMSIGMLLISIELFAMLCILLFIPVDYAGPCFIGFAIGESLGASVLRIAGGIFTKIADIGSDLMKIVFKIKEDDARNPGVIADCTGDNAGDSVGPTADGFETYGVTGVALISFILLAIKDPSIQVSLLVWIFAMRLVMIVASAVSYWVNDALAKMKYGNADEMNFEKPLITLVWLTSIVSIVLTYIASYMLIAQLGDGTMWWKLASIITCGTIAGALIPELVDRFTSTECAFVRNVVQCSKEGGAALNILSGLVAGNFSAYWMGLAIIVLMGAAFGFSTLGLDVMMLAPSVFAFGLVAFGFLSMGPVTIAVDSYGPVTDNAQSVYELSLIETLPNISNSIESEFGFKPDFENAKRYLEANDGAGNTFKATAKPVLIGTAVVGSTTMIFSIIMILTGGLADTGAIAKLSILWPPFLLGLLMGGAVIYWFTGASMNAVTTGAYYAVAFIKKNIKLDGVTKASTEDSKKVVEICTRFAQKGMINLFLTIFFSTLAFACLESYLFIGYLISIALFGLYQAIFMANAGGAWDNAKKVVETELHAKGTELHDASVVGDTVGDPFKDTSSVALNPIIKFTTLFGLLAIELAIKLPTTISVSLAVVFFLLSLVFVHRSFFSMRIAVDKD</sequence>
<accession>Q8KDT8</accession>
<comment type="function">
    <text evidence="2">Proton pump that utilizes the energy of pyrophosphate hydrolysis as the driving force for proton movement across the membrane. Generates a proton motive force.</text>
</comment>
<comment type="catalytic activity">
    <reaction evidence="2">
        <text>diphosphate + H2O + H(+)(in) = 2 phosphate + 2 H(+)(out)</text>
        <dbReference type="Rhea" id="RHEA:13973"/>
        <dbReference type="ChEBI" id="CHEBI:15377"/>
        <dbReference type="ChEBI" id="CHEBI:15378"/>
        <dbReference type="ChEBI" id="CHEBI:33019"/>
        <dbReference type="ChEBI" id="CHEBI:43474"/>
        <dbReference type="EC" id="7.1.3.1"/>
    </reaction>
</comment>
<comment type="cofactor">
    <cofactor evidence="2">
        <name>Mg(2+)</name>
        <dbReference type="ChEBI" id="CHEBI:18420"/>
    </cofactor>
</comment>
<comment type="subunit">
    <text evidence="2">Homodimer.</text>
</comment>
<comment type="subcellular location">
    <subcellularLocation>
        <location evidence="2">Cell inner membrane</location>
        <topology evidence="2">Multi-pass membrane protein</topology>
    </subcellularLocation>
</comment>
<comment type="similarity">
    <text evidence="2">Belongs to the H(+)-translocating pyrophosphatase (TC 3.A.10) family. K(+)-insensitive subfamily.</text>
</comment>
<organism>
    <name type="scientific">Chlorobaculum tepidum (strain ATCC 49652 / DSM 12025 / NBRC 103806 / TLS)</name>
    <name type="common">Chlorobium tepidum</name>
    <dbReference type="NCBI Taxonomy" id="194439"/>
    <lineage>
        <taxon>Bacteria</taxon>
        <taxon>Pseudomonadati</taxon>
        <taxon>Chlorobiota</taxon>
        <taxon>Chlorobiia</taxon>
        <taxon>Chlorobiales</taxon>
        <taxon>Chlorobiaceae</taxon>
        <taxon>Chlorobaculum</taxon>
    </lineage>
</organism>
<name>HPPA_CHLTE</name>
<feature type="chain" id="PRO_0000217015" description="K(+)-insensitive pyrophosphate-energized proton pump">
    <location>
        <begin position="1"/>
        <end position="750"/>
    </location>
</feature>
<feature type="transmembrane region" description="Helical" evidence="2">
    <location>
        <begin position="1"/>
        <end position="21"/>
    </location>
</feature>
<feature type="transmembrane region" description="Helical" evidence="2">
    <location>
        <begin position="51"/>
        <end position="71"/>
    </location>
</feature>
<feature type="transmembrane region" description="Helical" evidence="2">
    <location>
        <begin position="78"/>
        <end position="98"/>
    </location>
</feature>
<feature type="transmembrane region" description="Helical" evidence="2">
    <location>
        <begin position="133"/>
        <end position="153"/>
    </location>
</feature>
<feature type="transmembrane region" description="Helical" evidence="2">
    <location>
        <begin position="161"/>
        <end position="181"/>
    </location>
</feature>
<feature type="transmembrane region" description="Helical" evidence="2">
    <location>
        <begin position="227"/>
        <end position="247"/>
    </location>
</feature>
<feature type="transmembrane region" description="Helical" evidence="2">
    <location>
        <begin position="257"/>
        <end position="277"/>
    </location>
</feature>
<feature type="transmembrane region" description="Helical" evidence="2">
    <location>
        <begin position="301"/>
        <end position="321"/>
    </location>
</feature>
<feature type="transmembrane region" description="Helical" evidence="2">
    <location>
        <begin position="327"/>
        <end position="347"/>
    </location>
</feature>
<feature type="transmembrane region" description="Helical" evidence="2">
    <location>
        <begin position="391"/>
        <end position="411"/>
    </location>
</feature>
<feature type="transmembrane region" description="Helical" evidence="2">
    <location>
        <begin position="420"/>
        <end position="440"/>
    </location>
</feature>
<feature type="transmembrane region" description="Helical" evidence="2">
    <location>
        <begin position="503"/>
        <end position="523"/>
    </location>
</feature>
<feature type="transmembrane region" description="Helical" evidence="2">
    <location>
        <begin position="538"/>
        <end position="558"/>
    </location>
</feature>
<feature type="transmembrane region" description="Helical" evidence="2">
    <location>
        <begin position="607"/>
        <end position="627"/>
    </location>
</feature>
<feature type="transmembrane region" description="Helical" evidence="2">
    <location>
        <begin position="629"/>
        <end position="649"/>
    </location>
</feature>
<feature type="transmembrane region" description="Helical" evidence="2">
    <location>
        <begin position="694"/>
        <end position="714"/>
    </location>
</feature>
<feature type="transmembrane region" description="Helical" evidence="2">
    <location>
        <begin position="716"/>
        <end position="736"/>
    </location>
</feature>
<feature type="binding site" evidence="1">
    <location>
        <position position="184"/>
    </location>
    <ligand>
        <name>substrate</name>
    </ligand>
</feature>
<feature type="binding site" evidence="1">
    <location>
        <position position="187"/>
    </location>
    <ligand>
        <name>Mg(2+)</name>
        <dbReference type="ChEBI" id="CHEBI:18420"/>
        <label>1</label>
    </ligand>
</feature>
<feature type="binding site" evidence="1">
    <location>
        <position position="191"/>
    </location>
    <ligand>
        <name>Mg(2+)</name>
        <dbReference type="ChEBI" id="CHEBI:18420"/>
        <label>1</label>
    </ligand>
</feature>
<feature type="binding site" evidence="1">
    <location>
        <position position="216"/>
    </location>
    <ligand>
        <name>Mg(2+)</name>
        <dbReference type="ChEBI" id="CHEBI:18420"/>
        <label>2</label>
    </ligand>
</feature>
<feature type="binding site" evidence="1">
    <location>
        <position position="448"/>
    </location>
    <ligand>
        <name>Mg(2+)</name>
        <dbReference type="ChEBI" id="CHEBI:18420"/>
        <label>2</label>
    </ligand>
</feature>
<feature type="binding site" evidence="1">
    <location>
        <position position="656"/>
    </location>
    <ligand>
        <name>Ca(2+)</name>
        <dbReference type="ChEBI" id="CHEBI:29108"/>
    </ligand>
</feature>
<feature type="binding site" evidence="1">
    <location>
        <position position="681"/>
    </location>
    <ligand>
        <name>Ca(2+)</name>
        <dbReference type="ChEBI" id="CHEBI:29108"/>
    </ligand>
</feature>
<feature type="binding site" evidence="1">
    <location>
        <position position="685"/>
    </location>
    <ligand>
        <name>Ca(2+)</name>
        <dbReference type="ChEBI" id="CHEBI:29108"/>
    </ligand>
</feature>
<feature type="binding site" evidence="1">
    <location>
        <position position="688"/>
    </location>
    <ligand>
        <name>substrate</name>
    </ligand>
</feature>
<feature type="site" description="Important for ion transport" evidence="1">
    <location>
        <position position="176"/>
    </location>
</feature>
<feature type="site" description="Important for ion transport" evidence="1">
    <location>
        <position position="220"/>
    </location>
</feature>
<feature type="site" description="Important for ion transport" evidence="1">
    <location>
        <position position="227"/>
    </location>
</feature>
<feature type="site" description="Determinant of potassium independence" evidence="2">
    <location>
        <position position="497"/>
    </location>
</feature>
<feature type="site" description="Important for ion transport" evidence="1">
    <location>
        <position position="689"/>
    </location>
</feature>
<feature type="site" description="Important for ion transport" evidence="1">
    <location>
        <position position="700"/>
    </location>
</feature>
<reference key="1">
    <citation type="journal article" date="2002" name="Proc. Natl. Acad. Sci. U.S.A.">
        <title>The complete genome sequence of Chlorobium tepidum TLS, a photosynthetic, anaerobic, green-sulfur bacterium.</title>
        <authorList>
            <person name="Eisen J.A."/>
            <person name="Nelson K.E."/>
            <person name="Paulsen I.T."/>
            <person name="Heidelberg J.F."/>
            <person name="Wu M."/>
            <person name="Dodson R.J."/>
            <person name="DeBoy R.T."/>
            <person name="Gwinn M.L."/>
            <person name="Nelson W.C."/>
            <person name="Haft D.H."/>
            <person name="Hickey E.K."/>
            <person name="Peterson J.D."/>
            <person name="Durkin A.S."/>
            <person name="Kolonay J.F."/>
            <person name="Yang F."/>
            <person name="Holt I.E."/>
            <person name="Umayam L.A."/>
            <person name="Mason T.M."/>
            <person name="Brenner M."/>
            <person name="Shea T.P."/>
            <person name="Parksey D.S."/>
            <person name="Nierman W.C."/>
            <person name="Feldblyum T.V."/>
            <person name="Hansen C.L."/>
            <person name="Craven M.B."/>
            <person name="Radune D."/>
            <person name="Vamathevan J.J."/>
            <person name="Khouri H.M."/>
            <person name="White O."/>
            <person name="Gruber T.M."/>
            <person name="Ketchum K.A."/>
            <person name="Venter J.C."/>
            <person name="Tettelin H."/>
            <person name="Bryant D.A."/>
            <person name="Fraser C.M."/>
        </authorList>
    </citation>
    <scope>NUCLEOTIDE SEQUENCE [LARGE SCALE GENOMIC DNA]</scope>
    <source>
        <strain>ATCC 49652 / DSM 12025 / NBRC 103806 / TLS</strain>
    </source>
</reference>
<proteinExistence type="inferred from homology"/>
<gene>
    <name evidence="2" type="primary">hppA</name>
    <name type="ordered locus">CT0956</name>
</gene>
<protein>
    <recommendedName>
        <fullName evidence="2">K(+)-insensitive pyrophosphate-energized proton pump</fullName>
        <ecNumber evidence="2">7.1.3.1</ecNumber>
    </recommendedName>
    <alternativeName>
        <fullName evidence="2">Membrane-bound proton-translocating pyrophosphatase</fullName>
    </alternativeName>
    <alternativeName>
        <fullName evidence="2">Pyrophosphate-energized inorganic pyrophosphatase</fullName>
        <shortName evidence="2">H(+)-PPase</shortName>
    </alternativeName>
</protein>